<feature type="chain" id="PRO_0000147098" description="Multiphosphoryl transfer protein">
    <location>
        <begin position="1"/>
        <end position="831"/>
    </location>
</feature>
<feature type="domain" description="HPr" evidence="6">
    <location>
        <begin position="1"/>
        <end position="90"/>
    </location>
</feature>
<feature type="domain" description="PTS EIIA type-2" evidence="5">
    <location>
        <begin position="685"/>
        <end position="828"/>
    </location>
</feature>
<feature type="region of interest" description="PTS EI" evidence="4">
    <location>
        <begin position="119"/>
        <end position="650"/>
    </location>
</feature>
<feature type="active site" description="Pros-phosphohistidine intermediate; for HPr activity" evidence="6">
    <location>
        <position position="15"/>
    </location>
</feature>
<feature type="active site" description="Tele-phosphohistidine intermediate; for PTS EI activity" evidence="1 5">
    <location>
        <position position="298"/>
    </location>
</feature>
<feature type="active site" description="Proton donor; for EI activity" evidence="1">
    <location>
        <position position="611"/>
    </location>
</feature>
<feature type="active site" description="Tele-phosphohistidine intermediate; for PTS EIIA activity" evidence="5">
    <location>
        <position position="747"/>
    </location>
</feature>
<feature type="binding site" evidence="3">
    <location>
        <position position="405"/>
    </location>
    <ligand>
        <name>phosphoenolpyruvate</name>
        <dbReference type="ChEBI" id="CHEBI:58702"/>
    </ligand>
</feature>
<feature type="binding site" evidence="1">
    <location>
        <position position="441"/>
    </location>
    <ligand>
        <name>phosphoenolpyruvate</name>
        <dbReference type="ChEBI" id="CHEBI:58702"/>
    </ligand>
</feature>
<feature type="binding site" evidence="1">
    <location>
        <position position="540"/>
    </location>
    <ligand>
        <name>Mg(2+)</name>
        <dbReference type="ChEBI" id="CHEBI:18420"/>
    </ligand>
</feature>
<feature type="binding site" evidence="1">
    <location>
        <begin position="563"/>
        <end position="564"/>
    </location>
    <ligand>
        <name>phosphoenolpyruvate</name>
        <dbReference type="ChEBI" id="CHEBI:58702"/>
    </ligand>
</feature>
<feature type="binding site" evidence="1">
    <location>
        <position position="564"/>
    </location>
    <ligand>
        <name>Mg(2+)</name>
        <dbReference type="ChEBI" id="CHEBI:18420"/>
    </ligand>
</feature>
<feature type="binding site" evidence="3">
    <location>
        <position position="574"/>
    </location>
    <ligand>
        <name>phosphoenolpyruvate</name>
        <dbReference type="ChEBI" id="CHEBI:58702"/>
    </ligand>
</feature>
<feature type="modified residue" description="Phosphohistidine; by EI" evidence="7">
    <location>
        <position position="15"/>
    </location>
</feature>
<feature type="modified residue" description="Phosphohistidine; by autocatalysis" evidence="7">
    <location>
        <position position="298"/>
    </location>
</feature>
<feature type="modified residue" description="Phosphohistidine; by HPr" evidence="7">
    <location>
        <position position="747"/>
    </location>
</feature>
<reference key="1">
    <citation type="journal article" date="2002" name="Proc. Natl. Acad. Sci. U.S.A.">
        <title>Extensive mosaic structure revealed by the complete genome sequence of uropathogenic Escherichia coli.</title>
        <authorList>
            <person name="Welch R.A."/>
            <person name="Burland V."/>
            <person name="Plunkett G. III"/>
            <person name="Redford P."/>
            <person name="Roesch P."/>
            <person name="Rasko D."/>
            <person name="Buckles E.L."/>
            <person name="Liou S.-R."/>
            <person name="Boutin A."/>
            <person name="Hackett J."/>
            <person name="Stroud D."/>
            <person name="Mayhew G.F."/>
            <person name="Rose D.J."/>
            <person name="Zhou S."/>
            <person name="Schwartz D.C."/>
            <person name="Perna N.T."/>
            <person name="Mobley H.L.T."/>
            <person name="Donnenberg M.S."/>
            <person name="Blattner F.R."/>
        </authorList>
    </citation>
    <scope>NUCLEOTIDE SEQUENCE [LARGE SCALE GENOMIC DNA]</scope>
    <source>
        <strain>CFT073 / ATCC 700928 / UPEC</strain>
    </source>
</reference>
<dbReference type="EC" id="2.7.3.9" evidence="1"/>
<dbReference type="EC" id="2.7.1.202" evidence="2"/>
<dbReference type="EMBL" id="AE014075">
    <property type="protein sequence ID" value="AAN81372.1"/>
    <property type="molecule type" value="Genomic_DNA"/>
</dbReference>
<dbReference type="SMR" id="Q8FFD8"/>
<dbReference type="STRING" id="199310.c2922"/>
<dbReference type="KEGG" id="ecc:c2922"/>
<dbReference type="eggNOG" id="COG1080">
    <property type="taxonomic scope" value="Bacteria"/>
</dbReference>
<dbReference type="eggNOG" id="COG1762">
    <property type="taxonomic scope" value="Bacteria"/>
</dbReference>
<dbReference type="eggNOG" id="COG1925">
    <property type="taxonomic scope" value="Bacteria"/>
</dbReference>
<dbReference type="HOGENOM" id="CLU_007308_5_1_6"/>
<dbReference type="BioCyc" id="ECOL199310:C2922-MONOMER"/>
<dbReference type="Proteomes" id="UP000001410">
    <property type="component" value="Chromosome"/>
</dbReference>
<dbReference type="GO" id="GO:0005737">
    <property type="term" value="C:cytoplasm"/>
    <property type="evidence" value="ECO:0007669"/>
    <property type="project" value="UniProtKB-SubCell"/>
</dbReference>
<dbReference type="GO" id="GO:0016020">
    <property type="term" value="C:membrane"/>
    <property type="evidence" value="ECO:0007669"/>
    <property type="project" value="InterPro"/>
</dbReference>
<dbReference type="GO" id="GO:0016301">
    <property type="term" value="F:kinase activity"/>
    <property type="evidence" value="ECO:0007669"/>
    <property type="project" value="UniProtKB-KW"/>
</dbReference>
<dbReference type="GO" id="GO:0046872">
    <property type="term" value="F:metal ion binding"/>
    <property type="evidence" value="ECO:0007669"/>
    <property type="project" value="UniProtKB-KW"/>
</dbReference>
<dbReference type="GO" id="GO:0008965">
    <property type="term" value="F:phosphoenolpyruvate-protein phosphotransferase activity"/>
    <property type="evidence" value="ECO:0007669"/>
    <property type="project" value="UniProtKB-EC"/>
</dbReference>
<dbReference type="GO" id="GO:0008982">
    <property type="term" value="F:protein-N(PI)-phosphohistidine-sugar phosphotransferase activity"/>
    <property type="evidence" value="ECO:0007669"/>
    <property type="project" value="InterPro"/>
</dbReference>
<dbReference type="GO" id="GO:0009401">
    <property type="term" value="P:phosphoenolpyruvate-dependent sugar phosphotransferase system"/>
    <property type="evidence" value="ECO:0007669"/>
    <property type="project" value="UniProtKB-KW"/>
</dbReference>
<dbReference type="CDD" id="cd00367">
    <property type="entry name" value="PTS-HPr_like"/>
    <property type="match status" value="1"/>
</dbReference>
<dbReference type="CDD" id="cd00211">
    <property type="entry name" value="PTS_IIA_fru"/>
    <property type="match status" value="1"/>
</dbReference>
<dbReference type="Gene3D" id="3.30.1340.10">
    <property type="entry name" value="HPr-like"/>
    <property type="match status" value="1"/>
</dbReference>
<dbReference type="Gene3D" id="3.40.930.10">
    <property type="entry name" value="Mannitol-specific EII, Chain A"/>
    <property type="match status" value="1"/>
</dbReference>
<dbReference type="Gene3D" id="3.20.20.60">
    <property type="entry name" value="Phosphoenolpyruvate-binding domains"/>
    <property type="match status" value="1"/>
</dbReference>
<dbReference type="Gene3D" id="3.50.30.10">
    <property type="entry name" value="Phosphohistidine domain"/>
    <property type="match status" value="1"/>
</dbReference>
<dbReference type="Gene3D" id="1.10.274.10">
    <property type="entry name" value="PtsI, HPr-binding domain"/>
    <property type="match status" value="1"/>
</dbReference>
<dbReference type="InterPro" id="IPR000032">
    <property type="entry name" value="HPr-like"/>
</dbReference>
<dbReference type="InterPro" id="IPR035895">
    <property type="entry name" value="HPr-like_sf"/>
</dbReference>
<dbReference type="InterPro" id="IPR008279">
    <property type="entry name" value="PEP-util_enz_mobile_dom"/>
</dbReference>
<dbReference type="InterPro" id="IPR050499">
    <property type="entry name" value="PEP-utilizing_PTS_enzyme"/>
</dbReference>
<dbReference type="InterPro" id="IPR000121">
    <property type="entry name" value="PEP_util_C"/>
</dbReference>
<dbReference type="InterPro" id="IPR023151">
    <property type="entry name" value="PEP_util_CS"/>
</dbReference>
<dbReference type="InterPro" id="IPR036637">
    <property type="entry name" value="Phosphohistidine_dom_sf"/>
</dbReference>
<dbReference type="InterPro" id="IPR016152">
    <property type="entry name" value="PTrfase/Anion_transptr"/>
</dbReference>
<dbReference type="InterPro" id="IPR006318">
    <property type="entry name" value="PTS_EI-like"/>
</dbReference>
<dbReference type="InterPro" id="IPR002178">
    <property type="entry name" value="PTS_EIIA_type-2_dom"/>
</dbReference>
<dbReference type="InterPro" id="IPR008731">
    <property type="entry name" value="PTS_EIN"/>
</dbReference>
<dbReference type="InterPro" id="IPR004715">
    <property type="entry name" value="PTS_IIA_fruc"/>
</dbReference>
<dbReference type="InterPro" id="IPR036618">
    <property type="entry name" value="PtsI_HPr-bd_sf"/>
</dbReference>
<dbReference type="InterPro" id="IPR015813">
    <property type="entry name" value="Pyrv/PenolPyrv_kinase-like_dom"/>
</dbReference>
<dbReference type="InterPro" id="IPR040442">
    <property type="entry name" value="Pyrv_kinase-like_dom_sf"/>
</dbReference>
<dbReference type="NCBIfam" id="TIGR00848">
    <property type="entry name" value="fruA"/>
    <property type="match status" value="1"/>
</dbReference>
<dbReference type="NCBIfam" id="TIGR01417">
    <property type="entry name" value="PTS_I_fam"/>
    <property type="match status" value="1"/>
</dbReference>
<dbReference type="PANTHER" id="PTHR46244:SF4">
    <property type="entry name" value="MULTIPHOSPHORYL TRANSFER PROTEIN 1-RELATED"/>
    <property type="match status" value="1"/>
</dbReference>
<dbReference type="PANTHER" id="PTHR46244">
    <property type="entry name" value="PHOSPHOENOLPYRUVATE-PROTEIN PHOSPHOTRANSFERASE"/>
    <property type="match status" value="1"/>
</dbReference>
<dbReference type="Pfam" id="PF05524">
    <property type="entry name" value="PEP-utilisers_N"/>
    <property type="match status" value="1"/>
</dbReference>
<dbReference type="Pfam" id="PF00391">
    <property type="entry name" value="PEP-utilizers"/>
    <property type="match status" value="1"/>
</dbReference>
<dbReference type="Pfam" id="PF02896">
    <property type="entry name" value="PEP-utilizers_C"/>
    <property type="match status" value="1"/>
</dbReference>
<dbReference type="Pfam" id="PF00381">
    <property type="entry name" value="PTS-HPr"/>
    <property type="match status" value="1"/>
</dbReference>
<dbReference type="Pfam" id="PF00359">
    <property type="entry name" value="PTS_EIIA_2"/>
    <property type="match status" value="1"/>
</dbReference>
<dbReference type="PRINTS" id="PR01736">
    <property type="entry name" value="PHPHTRNFRASE"/>
</dbReference>
<dbReference type="SUPFAM" id="SSF47831">
    <property type="entry name" value="Enzyme I of the PEP:sugar phosphotransferase system HPr-binding (sub)domain"/>
    <property type="match status" value="1"/>
</dbReference>
<dbReference type="SUPFAM" id="SSF55594">
    <property type="entry name" value="HPr-like"/>
    <property type="match status" value="1"/>
</dbReference>
<dbReference type="SUPFAM" id="SSF55804">
    <property type="entry name" value="Phoshotransferase/anion transport protein"/>
    <property type="match status" value="1"/>
</dbReference>
<dbReference type="SUPFAM" id="SSF51621">
    <property type="entry name" value="Phosphoenolpyruvate/pyruvate domain"/>
    <property type="match status" value="1"/>
</dbReference>
<dbReference type="SUPFAM" id="SSF52009">
    <property type="entry name" value="Phosphohistidine domain"/>
    <property type="match status" value="1"/>
</dbReference>
<dbReference type="PROSITE" id="PS00742">
    <property type="entry name" value="PEP_ENZYMES_2"/>
    <property type="match status" value="1"/>
</dbReference>
<dbReference type="PROSITE" id="PS51094">
    <property type="entry name" value="PTS_EIIA_TYPE_2"/>
    <property type="match status" value="1"/>
</dbReference>
<dbReference type="PROSITE" id="PS51350">
    <property type="entry name" value="PTS_HPR_DOM"/>
    <property type="match status" value="1"/>
</dbReference>
<name>PTFX_ECOL6</name>
<comment type="function">
    <text evidence="4">Multifunctional protein that includes general (non sugar-specific) and sugar-specific components of the phosphoenolpyruvate-dependent sugar phosphotransferase system (sugar PTS). This major carbohydrate active transport system catalyzes the phosphorylation of incoming sugar substrates concomitantly with their translocation across the cell membrane. The enzyme II FryABC PTS system is involved in fructose transport.</text>
</comment>
<comment type="catalytic activity">
    <reaction evidence="1">
        <text>L-histidyl-[protein] + phosphoenolpyruvate = N(pros)-phospho-L-histidyl-[protein] + pyruvate</text>
        <dbReference type="Rhea" id="RHEA:23880"/>
        <dbReference type="Rhea" id="RHEA-COMP:9745"/>
        <dbReference type="Rhea" id="RHEA-COMP:9746"/>
        <dbReference type="ChEBI" id="CHEBI:15361"/>
        <dbReference type="ChEBI" id="CHEBI:29979"/>
        <dbReference type="ChEBI" id="CHEBI:58702"/>
        <dbReference type="ChEBI" id="CHEBI:64837"/>
        <dbReference type="EC" id="2.7.3.9"/>
    </reaction>
</comment>
<comment type="catalytic activity">
    <reaction evidence="2">
        <text>D-fructose(out) + N(pros)-phospho-L-histidyl-[protein] = D-fructose 1-phosphate(in) + L-histidyl-[protein]</text>
        <dbReference type="Rhea" id="RHEA:49252"/>
        <dbReference type="Rhea" id="RHEA-COMP:9745"/>
        <dbReference type="Rhea" id="RHEA-COMP:9746"/>
        <dbReference type="ChEBI" id="CHEBI:29979"/>
        <dbReference type="ChEBI" id="CHEBI:37721"/>
        <dbReference type="ChEBI" id="CHEBI:58674"/>
        <dbReference type="ChEBI" id="CHEBI:64837"/>
        <dbReference type="EC" id="2.7.1.202"/>
    </reaction>
</comment>
<comment type="cofactor">
    <cofactor evidence="1">
        <name>Mg(2+)</name>
        <dbReference type="ChEBI" id="CHEBI:18420"/>
    </cofactor>
</comment>
<comment type="subcellular location">
    <subcellularLocation>
        <location evidence="7">Cytoplasm</location>
    </subcellularLocation>
</comment>
<comment type="domain">
    <text evidence="5">The PTS EIIA type-2 domain is phosphorylated by phospho-HPr on a histidyl residue. Then, it transfers the phosphoryl group to the PTS EIIB type-2 domain.</text>
</comment>
<comment type="domain">
    <text evidence="7">In contrast to classical PTS systems, the fructose-like PTS has no requirement for HPr and Enzyme I; FryA combines a IIA domain with an Enzyme I and a HPr domains.</text>
</comment>
<comment type="similarity">
    <text evidence="7">Belongs to the PEP-utilizing enzyme family.</text>
</comment>
<evidence type="ECO:0000250" key="1">
    <source>
        <dbReference type="UniProtKB" id="P08839"/>
    </source>
</evidence>
<evidence type="ECO:0000250" key="2">
    <source>
        <dbReference type="UniProtKB" id="P20966"/>
    </source>
</evidence>
<evidence type="ECO:0000250" key="3">
    <source>
        <dbReference type="UniProtKB" id="P23533"/>
    </source>
</evidence>
<evidence type="ECO:0000250" key="4">
    <source>
        <dbReference type="UniProtKB" id="P77439"/>
    </source>
</evidence>
<evidence type="ECO:0000255" key="5">
    <source>
        <dbReference type="PROSITE-ProRule" id="PRU00417"/>
    </source>
</evidence>
<evidence type="ECO:0000255" key="6">
    <source>
        <dbReference type="PROSITE-ProRule" id="PRU00681"/>
    </source>
</evidence>
<evidence type="ECO:0000305" key="7"/>
<sequence>MLTIQFLCPLPNGLHARPAWELKEQCSQWQSEITFINHRQNAKADAKSSLALIGTGTLFNDSCSLNISGSDEEQARRVLEEYIQVRFIDSDSVQPTLAELTAHPLPRSLSRLNPDLLYGNVLASGVGVGTLTLLQSDSLDSYRVIPASAQDSTLLEHSLATLAEQLNQQLRERDGESKTILSAHLSLIQDDEFAGNIRHLMAEQHQGLGAAIISNMEQICAKLSASASDYLRERVSDIRDISEQLLHITWPELKPRNNLVLEKPTILVAEDLTPSQFLSLDLKNLAGMILEKTGRTSHTLILARASAIPVLSGLPLDAIARYAGQPAVLDAQCGVLAINPNDAVSGYYQVAQTLADKRQKQQAQAAAQLAYSRDKKRIDIAANIGTALEAPGAFANGAEGVGLFRTEMLYMDRDSAPDEQEQFEAYQQVLLAAGDKPIIFRTMDIGGDKSIPYLNIPQEENPFLGYRAVRIYPEFAGLFRTQLRAILRAASFGNAQLMIPMVHSLDQILWVKGELQKAIVELKRDGLRHAETITLGIMVEVPSVCYIIDHFCDEVDFFSIGSNDMTQYLYAVDRNNPRVSPLYNPITPSFLRMLQQIVTAAHQRGKWVGICGELGGESRYLPLLLGLGLDELSMSSPRIPAVKSQLRQLDSEACRELARQACECRSAQEIEALLTAFTPEEDVRPLLALENIFVDQSFSNKEQAIQFLCGNLGVNGRTEHPFELEEDVWQREEIVTTGVGFGVAIPHTKSQWIRHSSISIARLVKPVDWQSEMGEVELVIMLTLGANEGMNHVKVFSQLARKLVNKNFRQSLFAAQDAQSILTLLETELTF</sequence>
<accession>Q8FFD8</accession>
<proteinExistence type="inferred from homology"/>
<keyword id="KW-0963">Cytoplasm</keyword>
<keyword id="KW-0418">Kinase</keyword>
<keyword id="KW-0460">Magnesium</keyword>
<keyword id="KW-0479">Metal-binding</keyword>
<keyword id="KW-0597">Phosphoprotein</keyword>
<keyword id="KW-0598">Phosphotransferase system</keyword>
<keyword id="KW-1185">Reference proteome</keyword>
<keyword id="KW-0762">Sugar transport</keyword>
<keyword id="KW-0808">Transferase</keyword>
<keyword id="KW-0813">Transport</keyword>
<protein>
    <recommendedName>
        <fullName evidence="4">Multiphosphoryl transfer protein</fullName>
        <shortName evidence="4">MTP</shortName>
    </recommendedName>
    <alternativeName>
        <fullName evidence="4">Triphosphoryl transfer protein</fullName>
        <shortName evidence="4">TTP</shortName>
    </alternativeName>
    <domain>
        <recommendedName>
            <fullName evidence="4">Phosphoenolpyruvate-protein phosphotransferase</fullName>
            <ecNumber evidence="1">2.7.3.9</ecNumber>
        </recommendedName>
        <alternativeName>
            <fullName evidence="4">Phosphotransferase system enzyme I</fullName>
        </alternativeName>
    </domain>
    <domain>
        <recommendedName>
            <fullName evidence="4">Phosphocarrier protein HPr</fullName>
            <shortName evidence="4">Protein H</shortName>
        </recommendedName>
    </domain>
    <domain>
        <recommendedName>
            <fullName evidence="4">PTS system fructose-like EIIA component</fullName>
            <ecNumber evidence="2">2.7.1.202</ecNumber>
        </recommendedName>
        <alternativeName>
            <fullName evidence="4">Fructose-like phosphotransferase enzyme IIA component</fullName>
        </alternativeName>
    </domain>
</protein>
<organism>
    <name type="scientific">Escherichia coli O6:H1 (strain CFT073 / ATCC 700928 / UPEC)</name>
    <dbReference type="NCBI Taxonomy" id="199310"/>
    <lineage>
        <taxon>Bacteria</taxon>
        <taxon>Pseudomonadati</taxon>
        <taxon>Pseudomonadota</taxon>
        <taxon>Gammaproteobacteria</taxon>
        <taxon>Enterobacterales</taxon>
        <taxon>Enterobacteriaceae</taxon>
        <taxon>Escherichia</taxon>
    </lineage>
</organism>
<gene>
    <name type="primary">fryA</name>
    <name type="ordered locus">c2922</name>
</gene>